<protein>
    <recommendedName>
        <fullName>TBC1 domain family member 5</fullName>
    </recommendedName>
</protein>
<feature type="chain" id="PRO_0000208028" description="TBC1 domain family member 5">
    <location>
        <begin position="1"/>
        <end position="795"/>
    </location>
</feature>
<feature type="domain" description="Rab-GAP TBC" evidence="3">
    <location>
        <begin position="81"/>
        <end position="359"/>
    </location>
</feature>
<feature type="region of interest" description="Disordered" evidence="4">
    <location>
        <begin position="1"/>
        <end position="49"/>
    </location>
</feature>
<feature type="region of interest" description="Required for interaction with retromer; involved in interaction with ATG8 family proteins" evidence="7">
    <location>
        <begin position="56"/>
        <end position="64"/>
    </location>
</feature>
<feature type="region of interest" description="Disordered" evidence="4">
    <location>
        <begin position="475"/>
        <end position="564"/>
    </location>
</feature>
<feature type="region of interest" description="Disordered" evidence="4">
    <location>
        <begin position="674"/>
        <end position="795"/>
    </location>
</feature>
<feature type="region of interest" description="Required for interaction with ATG8 family proteins" evidence="7">
    <location>
        <begin position="786"/>
        <end position="791"/>
    </location>
</feature>
<feature type="short sequence motif" description="LIR 1" evidence="12 13">
    <location>
        <begin position="57"/>
        <end position="62"/>
    </location>
</feature>
<feature type="short sequence motif" description="LIR 2" evidence="12 13">
    <location>
        <begin position="785"/>
        <end position="789"/>
    </location>
</feature>
<feature type="compositionally biased region" description="Basic and acidic residues" evidence="4">
    <location>
        <begin position="1"/>
        <end position="13"/>
    </location>
</feature>
<feature type="compositionally biased region" description="Polar residues" evidence="4">
    <location>
        <begin position="25"/>
        <end position="49"/>
    </location>
</feature>
<feature type="compositionally biased region" description="Low complexity" evidence="4">
    <location>
        <begin position="484"/>
        <end position="496"/>
    </location>
</feature>
<feature type="compositionally biased region" description="Polar residues" evidence="4">
    <location>
        <begin position="523"/>
        <end position="542"/>
    </location>
</feature>
<feature type="compositionally biased region" description="Polar residues" evidence="4">
    <location>
        <begin position="554"/>
        <end position="564"/>
    </location>
</feature>
<feature type="compositionally biased region" description="Polar residues" evidence="4">
    <location>
        <begin position="727"/>
        <end position="748"/>
    </location>
</feature>
<feature type="compositionally biased region" description="Low complexity" evidence="4">
    <location>
        <begin position="765"/>
        <end position="776"/>
    </location>
</feature>
<feature type="site" description="Arginine finger" evidence="2">
    <location>
        <position position="169"/>
    </location>
</feature>
<feature type="site" description="Glutamine finger" evidence="2">
    <location>
        <position position="204"/>
    </location>
</feature>
<feature type="modified residue" description="Phosphothreonine" evidence="15">
    <location>
        <position position="42"/>
    </location>
</feature>
<feature type="modified residue" description="Phosphoserine" evidence="19">
    <location>
        <position position="43"/>
    </location>
</feature>
<feature type="modified residue" description="Phosphoserine" evidence="19">
    <location>
        <position position="44"/>
    </location>
</feature>
<feature type="modified residue" description="Phosphoserine" evidence="19">
    <location>
        <position position="460"/>
    </location>
</feature>
<feature type="modified residue" description="Phosphoserine" evidence="19 20">
    <location>
        <position position="522"/>
    </location>
</feature>
<feature type="modified residue" description="Phosphoserine" evidence="20">
    <location>
        <position position="539"/>
    </location>
</feature>
<feature type="modified residue" description="Phosphoserine" evidence="16 19 20">
    <location>
        <position position="541"/>
    </location>
</feature>
<feature type="modified residue" description="Phosphoserine" evidence="15 16 19 20">
    <location>
        <position position="544"/>
    </location>
</feature>
<feature type="modified residue" description="Phosphoserine" evidence="19">
    <location>
        <position position="554"/>
    </location>
</feature>
<feature type="modified residue" description="Phosphoserine" evidence="19">
    <location>
        <position position="570"/>
    </location>
</feature>
<feature type="modified residue" description="Phosphoserine" evidence="1">
    <location>
        <position position="584"/>
    </location>
</feature>
<feature type="modified residue" description="Phosphoserine" evidence="19">
    <location>
        <position position="730"/>
    </location>
</feature>
<feature type="modified residue" description="Phosphoserine" evidence="17 18">
    <location>
        <position position="791"/>
    </location>
</feature>
<feature type="splice variant" id="VSP_045039" description="In isoform 2." evidence="9">
    <original>K</original>
    <variation>KGDVVTGSDAQVSVPVQTLTDLQ</variation>
    <location>
        <position position="529"/>
    </location>
</feature>
<feature type="sequence variant" id="VAR_052536" description="In dbSNP:rs1138454.">
    <original>I</original>
    <variation>V</variation>
    <location>
        <position position="696"/>
    </location>
</feature>
<feature type="mutagenesis site" description="Disrupts interaction with VPS29." evidence="7">
    <original>W</original>
    <variation>A</variation>
    <location>
        <position position="59"/>
    </location>
</feature>
<feature type="mutagenesis site" description="Abolishes retromer displacement from endosome membrane; no effect on interaction with VPS29; when associated with A-204." evidence="6">
    <original>R</original>
    <variation>A</variation>
    <location>
        <position position="169"/>
    </location>
</feature>
<feature type="mutagenesis site" description="Abolishes retromer displacement from endosome membrane; no effect on interaction with VPS29; when associated with A-169." evidence="6">
    <original>Q</original>
    <variation>A</variation>
    <location>
        <position position="204"/>
    </location>
</feature>
<feature type="turn" evidence="21">
    <location>
        <begin position="136"/>
        <end position="138"/>
    </location>
</feature>
<feature type="helix" evidence="21">
    <location>
        <begin position="149"/>
        <end position="155"/>
    </location>
</feature>
<organism>
    <name type="scientific">Homo sapiens</name>
    <name type="common">Human</name>
    <dbReference type="NCBI Taxonomy" id="9606"/>
    <lineage>
        <taxon>Eukaryota</taxon>
        <taxon>Metazoa</taxon>
        <taxon>Chordata</taxon>
        <taxon>Craniata</taxon>
        <taxon>Vertebrata</taxon>
        <taxon>Euteleostomi</taxon>
        <taxon>Mammalia</taxon>
        <taxon>Eutheria</taxon>
        <taxon>Euarchontoglires</taxon>
        <taxon>Primates</taxon>
        <taxon>Haplorrhini</taxon>
        <taxon>Catarrhini</taxon>
        <taxon>Hominidae</taxon>
        <taxon>Homo</taxon>
    </lineage>
</organism>
<keyword id="KW-0002">3D-structure</keyword>
<keyword id="KW-0025">Alternative splicing</keyword>
<keyword id="KW-0072">Autophagy</keyword>
<keyword id="KW-0968">Cytoplasmic vesicle</keyword>
<keyword id="KW-0967">Endosome</keyword>
<keyword id="KW-0343">GTPase activation</keyword>
<keyword id="KW-0472">Membrane</keyword>
<keyword id="KW-0597">Phosphoprotein</keyword>
<keyword id="KW-0653">Protein transport</keyword>
<keyword id="KW-1267">Proteomics identification</keyword>
<keyword id="KW-1185">Reference proteome</keyword>
<keyword id="KW-0813">Transport</keyword>
<reference key="1">
    <citation type="journal article" date="1996" name="DNA Res.">
        <title>Prediction of the coding sequences of unidentified human genes. VI. The coding sequences of 80 new genes (KIAA0201-KIAA0280) deduced by analysis of cDNA clones from cell line KG-1 and brain.</title>
        <authorList>
            <person name="Nagase T."/>
            <person name="Seki N."/>
            <person name="Ishikawa K."/>
            <person name="Ohira M."/>
            <person name="Kawarabayasi Y."/>
            <person name="Ohara O."/>
            <person name="Tanaka A."/>
            <person name="Kotani H."/>
            <person name="Miyajima N."/>
            <person name="Nomura N."/>
        </authorList>
    </citation>
    <scope>NUCLEOTIDE SEQUENCE [LARGE SCALE MRNA] (ISOFORM 1)</scope>
    <source>
        <tissue>Bone marrow</tissue>
    </source>
</reference>
<reference key="2">
    <citation type="journal article" date="2004" name="Nat. Genet.">
        <title>Complete sequencing and characterization of 21,243 full-length human cDNAs.</title>
        <authorList>
            <person name="Ota T."/>
            <person name="Suzuki Y."/>
            <person name="Nishikawa T."/>
            <person name="Otsuki T."/>
            <person name="Sugiyama T."/>
            <person name="Irie R."/>
            <person name="Wakamatsu A."/>
            <person name="Hayashi K."/>
            <person name="Sato H."/>
            <person name="Nagai K."/>
            <person name="Kimura K."/>
            <person name="Makita H."/>
            <person name="Sekine M."/>
            <person name="Obayashi M."/>
            <person name="Nishi T."/>
            <person name="Shibahara T."/>
            <person name="Tanaka T."/>
            <person name="Ishii S."/>
            <person name="Yamamoto J."/>
            <person name="Saito K."/>
            <person name="Kawai Y."/>
            <person name="Isono Y."/>
            <person name="Nakamura Y."/>
            <person name="Nagahari K."/>
            <person name="Murakami K."/>
            <person name="Yasuda T."/>
            <person name="Iwayanagi T."/>
            <person name="Wagatsuma M."/>
            <person name="Shiratori A."/>
            <person name="Sudo H."/>
            <person name="Hosoiri T."/>
            <person name="Kaku Y."/>
            <person name="Kodaira H."/>
            <person name="Kondo H."/>
            <person name="Sugawara M."/>
            <person name="Takahashi M."/>
            <person name="Kanda K."/>
            <person name="Yokoi T."/>
            <person name="Furuya T."/>
            <person name="Kikkawa E."/>
            <person name="Omura Y."/>
            <person name="Abe K."/>
            <person name="Kamihara K."/>
            <person name="Katsuta N."/>
            <person name="Sato K."/>
            <person name="Tanikawa M."/>
            <person name="Yamazaki M."/>
            <person name="Ninomiya K."/>
            <person name="Ishibashi T."/>
            <person name="Yamashita H."/>
            <person name="Murakawa K."/>
            <person name="Fujimori K."/>
            <person name="Tanai H."/>
            <person name="Kimata M."/>
            <person name="Watanabe M."/>
            <person name="Hiraoka S."/>
            <person name="Chiba Y."/>
            <person name="Ishida S."/>
            <person name="Ono Y."/>
            <person name="Takiguchi S."/>
            <person name="Watanabe S."/>
            <person name="Yosida M."/>
            <person name="Hotuta T."/>
            <person name="Kusano J."/>
            <person name="Kanehori K."/>
            <person name="Takahashi-Fujii A."/>
            <person name="Hara H."/>
            <person name="Tanase T.-O."/>
            <person name="Nomura Y."/>
            <person name="Togiya S."/>
            <person name="Komai F."/>
            <person name="Hara R."/>
            <person name="Takeuchi K."/>
            <person name="Arita M."/>
            <person name="Imose N."/>
            <person name="Musashino K."/>
            <person name="Yuuki H."/>
            <person name="Oshima A."/>
            <person name="Sasaki N."/>
            <person name="Aotsuka S."/>
            <person name="Yoshikawa Y."/>
            <person name="Matsunawa H."/>
            <person name="Ichihara T."/>
            <person name="Shiohata N."/>
            <person name="Sano S."/>
            <person name="Moriya S."/>
            <person name="Momiyama H."/>
            <person name="Satoh N."/>
            <person name="Takami S."/>
            <person name="Terashima Y."/>
            <person name="Suzuki O."/>
            <person name="Nakagawa S."/>
            <person name="Senoh A."/>
            <person name="Mizoguchi H."/>
            <person name="Goto Y."/>
            <person name="Shimizu F."/>
            <person name="Wakebe H."/>
            <person name="Hishigaki H."/>
            <person name="Watanabe T."/>
            <person name="Sugiyama A."/>
            <person name="Takemoto M."/>
            <person name="Kawakami B."/>
            <person name="Yamazaki M."/>
            <person name="Watanabe K."/>
            <person name="Kumagai A."/>
            <person name="Itakura S."/>
            <person name="Fukuzumi Y."/>
            <person name="Fujimori Y."/>
            <person name="Komiyama M."/>
            <person name="Tashiro H."/>
            <person name="Tanigami A."/>
            <person name="Fujiwara T."/>
            <person name="Ono T."/>
            <person name="Yamada K."/>
            <person name="Fujii Y."/>
            <person name="Ozaki K."/>
            <person name="Hirao M."/>
            <person name="Ohmori Y."/>
            <person name="Kawabata A."/>
            <person name="Hikiji T."/>
            <person name="Kobatake N."/>
            <person name="Inagaki H."/>
            <person name="Ikema Y."/>
            <person name="Okamoto S."/>
            <person name="Okitani R."/>
            <person name="Kawakami T."/>
            <person name="Noguchi S."/>
            <person name="Itoh T."/>
            <person name="Shigeta K."/>
            <person name="Senba T."/>
            <person name="Matsumura K."/>
            <person name="Nakajima Y."/>
            <person name="Mizuno T."/>
            <person name="Morinaga M."/>
            <person name="Sasaki M."/>
            <person name="Togashi T."/>
            <person name="Oyama M."/>
            <person name="Hata H."/>
            <person name="Watanabe M."/>
            <person name="Komatsu T."/>
            <person name="Mizushima-Sugano J."/>
            <person name="Satoh T."/>
            <person name="Shirai Y."/>
            <person name="Takahashi Y."/>
            <person name="Nakagawa K."/>
            <person name="Okumura K."/>
            <person name="Nagase T."/>
            <person name="Nomura N."/>
            <person name="Kikuchi H."/>
            <person name="Masuho Y."/>
            <person name="Yamashita R."/>
            <person name="Nakai K."/>
            <person name="Yada T."/>
            <person name="Nakamura Y."/>
            <person name="Ohara O."/>
            <person name="Isogai T."/>
            <person name="Sugano S."/>
        </authorList>
    </citation>
    <scope>NUCLEOTIDE SEQUENCE [LARGE SCALE MRNA] (ISOFORM 2)</scope>
    <source>
        <tissue>Testis</tissue>
    </source>
</reference>
<reference key="3">
    <citation type="journal article" date="2006" name="Nature">
        <title>The DNA sequence, annotation and analysis of human chromosome 3.</title>
        <authorList>
            <person name="Muzny D.M."/>
            <person name="Scherer S.E."/>
            <person name="Kaul R."/>
            <person name="Wang J."/>
            <person name="Yu J."/>
            <person name="Sudbrak R."/>
            <person name="Buhay C.J."/>
            <person name="Chen R."/>
            <person name="Cree A."/>
            <person name="Ding Y."/>
            <person name="Dugan-Rocha S."/>
            <person name="Gill R."/>
            <person name="Gunaratne P."/>
            <person name="Harris R.A."/>
            <person name="Hawes A.C."/>
            <person name="Hernandez J."/>
            <person name="Hodgson A.V."/>
            <person name="Hume J."/>
            <person name="Jackson A."/>
            <person name="Khan Z.M."/>
            <person name="Kovar-Smith C."/>
            <person name="Lewis L.R."/>
            <person name="Lozado R.J."/>
            <person name="Metzker M.L."/>
            <person name="Milosavljevic A."/>
            <person name="Miner G.R."/>
            <person name="Morgan M.B."/>
            <person name="Nazareth L.V."/>
            <person name="Scott G."/>
            <person name="Sodergren E."/>
            <person name="Song X.-Z."/>
            <person name="Steffen D."/>
            <person name="Wei S."/>
            <person name="Wheeler D.A."/>
            <person name="Wright M.W."/>
            <person name="Worley K.C."/>
            <person name="Yuan Y."/>
            <person name="Zhang Z."/>
            <person name="Adams C.Q."/>
            <person name="Ansari-Lari M.A."/>
            <person name="Ayele M."/>
            <person name="Brown M.J."/>
            <person name="Chen G."/>
            <person name="Chen Z."/>
            <person name="Clendenning J."/>
            <person name="Clerc-Blankenburg K.P."/>
            <person name="Chen R."/>
            <person name="Chen Z."/>
            <person name="Davis C."/>
            <person name="Delgado O."/>
            <person name="Dinh H.H."/>
            <person name="Dong W."/>
            <person name="Draper H."/>
            <person name="Ernst S."/>
            <person name="Fu G."/>
            <person name="Gonzalez-Garay M.L."/>
            <person name="Garcia D.K."/>
            <person name="Gillett W."/>
            <person name="Gu J."/>
            <person name="Hao B."/>
            <person name="Haugen E."/>
            <person name="Havlak P."/>
            <person name="He X."/>
            <person name="Hennig S."/>
            <person name="Hu S."/>
            <person name="Huang W."/>
            <person name="Jackson L.R."/>
            <person name="Jacob L.S."/>
            <person name="Kelly S.H."/>
            <person name="Kube M."/>
            <person name="Levy R."/>
            <person name="Li Z."/>
            <person name="Liu B."/>
            <person name="Liu J."/>
            <person name="Liu W."/>
            <person name="Lu J."/>
            <person name="Maheshwari M."/>
            <person name="Nguyen B.-V."/>
            <person name="Okwuonu G.O."/>
            <person name="Palmeiri A."/>
            <person name="Pasternak S."/>
            <person name="Perez L.M."/>
            <person name="Phelps K.A."/>
            <person name="Plopper F.J."/>
            <person name="Qiang B."/>
            <person name="Raymond C."/>
            <person name="Rodriguez R."/>
            <person name="Saenphimmachak C."/>
            <person name="Santibanez J."/>
            <person name="Shen H."/>
            <person name="Shen Y."/>
            <person name="Subramanian S."/>
            <person name="Tabor P.E."/>
            <person name="Verduzco D."/>
            <person name="Waldron L."/>
            <person name="Wang J."/>
            <person name="Wang J."/>
            <person name="Wang Q."/>
            <person name="Williams G.A."/>
            <person name="Wong G.K.-S."/>
            <person name="Yao Z."/>
            <person name="Zhang J."/>
            <person name="Zhang X."/>
            <person name="Zhao G."/>
            <person name="Zhou J."/>
            <person name="Zhou Y."/>
            <person name="Nelson D."/>
            <person name="Lehrach H."/>
            <person name="Reinhardt R."/>
            <person name="Naylor S.L."/>
            <person name="Yang H."/>
            <person name="Olson M."/>
            <person name="Weinstock G."/>
            <person name="Gibbs R.A."/>
        </authorList>
    </citation>
    <scope>NUCLEOTIDE SEQUENCE [LARGE SCALE GENOMIC DNA]</scope>
</reference>
<reference key="4">
    <citation type="journal article" date="2004" name="Genome Res.">
        <title>The status, quality, and expansion of the NIH full-length cDNA project: the Mammalian Gene Collection (MGC).</title>
        <authorList>
            <consortium name="The MGC Project Team"/>
        </authorList>
    </citation>
    <scope>NUCLEOTIDE SEQUENCE [LARGE SCALE MRNA] (ISOFORM 1)</scope>
    <source>
        <tissue>Testis</tissue>
    </source>
</reference>
<reference key="5">
    <citation type="journal article" date="2004" name="Anal. Chem.">
        <title>Robust phosphoproteomic profiling of tyrosine phosphorylation sites from human T cells using immobilized metal affinity chromatography and tandem mass spectrometry.</title>
        <authorList>
            <person name="Brill L.M."/>
            <person name="Salomon A.R."/>
            <person name="Ficarro S.B."/>
            <person name="Mukherji M."/>
            <person name="Stettler-Gill M."/>
            <person name="Peters E.C."/>
        </authorList>
    </citation>
    <scope>IDENTIFICATION BY MASS SPECTROMETRY [LARGE SCALE ANALYSIS]</scope>
    <source>
        <tissue>Leukemic T-cell</tissue>
    </source>
</reference>
<reference key="6">
    <citation type="journal article" date="2006" name="Nat. Biotechnol.">
        <title>A probability-based approach for high-throughput protein phosphorylation analysis and site localization.</title>
        <authorList>
            <person name="Beausoleil S.A."/>
            <person name="Villen J."/>
            <person name="Gerber S.A."/>
            <person name="Rush J."/>
            <person name="Gygi S.P."/>
        </authorList>
    </citation>
    <scope>IDENTIFICATION BY MASS SPECTROMETRY [LARGE SCALE ANALYSIS]</scope>
    <source>
        <tissue>Cervix carcinoma</tissue>
    </source>
</reference>
<reference key="7">
    <citation type="journal article" date="2008" name="J. Proteome Res.">
        <title>Phosphoproteome of resting human platelets.</title>
        <authorList>
            <person name="Zahedi R.P."/>
            <person name="Lewandrowski U."/>
            <person name="Wiesner J."/>
            <person name="Wortelkamp S."/>
            <person name="Moebius J."/>
            <person name="Schuetz C."/>
            <person name="Walter U."/>
            <person name="Gambaryan S."/>
            <person name="Sickmann A."/>
        </authorList>
    </citation>
    <scope>IDENTIFICATION BY MASS SPECTROMETRY [LARGE SCALE ANALYSIS]</scope>
    <source>
        <tissue>Platelet</tissue>
    </source>
</reference>
<reference key="8">
    <citation type="journal article" date="2008" name="Mol. Cell">
        <title>Kinase-selective enrichment enables quantitative phosphoproteomics of the kinome across the cell cycle.</title>
        <authorList>
            <person name="Daub H."/>
            <person name="Olsen J.V."/>
            <person name="Bairlein M."/>
            <person name="Gnad F."/>
            <person name="Oppermann F.S."/>
            <person name="Korner R."/>
            <person name="Greff Z."/>
            <person name="Keri G."/>
            <person name="Stemmann O."/>
            <person name="Mann M."/>
        </authorList>
    </citation>
    <scope>IDENTIFICATION BY MASS SPECTROMETRY [LARGE SCALE ANALYSIS]</scope>
    <source>
        <tissue>Cervix carcinoma</tissue>
    </source>
</reference>
<reference key="9">
    <citation type="journal article" date="2008" name="Proc. Natl. Acad. Sci. U.S.A.">
        <title>A quantitative atlas of mitotic phosphorylation.</title>
        <authorList>
            <person name="Dephoure N."/>
            <person name="Zhou C."/>
            <person name="Villen J."/>
            <person name="Beausoleil S.A."/>
            <person name="Bakalarski C.E."/>
            <person name="Elledge S.J."/>
            <person name="Gygi S.P."/>
        </authorList>
    </citation>
    <scope>PHOSPHORYLATION [LARGE SCALE ANALYSIS] AT THR-42 AND SER-544</scope>
    <scope>IDENTIFICATION BY MASS SPECTROMETRY [LARGE SCALE ANALYSIS]</scope>
    <source>
        <tissue>Cervix carcinoma</tissue>
    </source>
</reference>
<reference key="10">
    <citation type="journal article" date="2009" name="J. Cell Sci.">
        <title>Membrane recruitment of the cargo-selective retromer subcomplex is catalysed by the small GTPase Rab7 and inhibited by the Rab-GAP TBC1D5.</title>
        <authorList>
            <person name="Seaman M.N."/>
            <person name="Harbour M.E."/>
            <person name="Tattersall D."/>
            <person name="Read E."/>
            <person name="Bright N."/>
        </authorList>
    </citation>
    <scope>FUNCTION</scope>
</reference>
<reference key="11">
    <citation type="journal article" date="2009" name="Sci. Signal.">
        <title>Quantitative phosphoproteomic analysis of T cell receptor signaling reveals system-wide modulation of protein-protein interactions.</title>
        <authorList>
            <person name="Mayya V."/>
            <person name="Lundgren D.H."/>
            <person name="Hwang S.-I."/>
            <person name="Rezaul K."/>
            <person name="Wu L."/>
            <person name="Eng J.K."/>
            <person name="Rodionov V."/>
            <person name="Han D.K."/>
        </authorList>
    </citation>
    <scope>PHOSPHORYLATION [LARGE SCALE ANALYSIS] AT SER-541 AND SER-544</scope>
    <scope>IDENTIFICATION BY MASS SPECTROMETRY [LARGE SCALE ANALYSIS]</scope>
    <source>
        <tissue>Leukemic T-cell</tissue>
    </source>
</reference>
<reference key="12">
    <citation type="journal article" date="2010" name="J. Cell Sci.">
        <title>The cargo-selective retromer complex is a recruiting hub for protein complexes that regulate endosomal tubule dynamics.</title>
        <authorList>
            <person name="Harbour M.E."/>
            <person name="Breusegem S.Y."/>
            <person name="Antrobus R."/>
            <person name="Freeman C."/>
            <person name="Reid E."/>
            <person name="Seaman M.N."/>
        </authorList>
    </citation>
    <scope>FUNCTION</scope>
    <scope>INTERACTION WITH VPS29</scope>
    <scope>SUBCELLULAR LOCATION</scope>
    <scope>MUTAGENESIS OF ARG-169 AND GLN-204</scope>
</reference>
<reference key="13">
    <citation type="journal article" date="2010" name="Sci. Signal.">
        <title>Quantitative phosphoproteomics reveals widespread full phosphorylation site occupancy during mitosis.</title>
        <authorList>
            <person name="Olsen J.V."/>
            <person name="Vermeulen M."/>
            <person name="Santamaria A."/>
            <person name="Kumar C."/>
            <person name="Miller M.L."/>
            <person name="Jensen L.J."/>
            <person name="Gnad F."/>
            <person name="Cox J."/>
            <person name="Jensen T.S."/>
            <person name="Nigg E.A."/>
            <person name="Brunak S."/>
            <person name="Mann M."/>
        </authorList>
    </citation>
    <scope>PHOSPHORYLATION [LARGE SCALE ANALYSIS] AT SER-791</scope>
    <scope>IDENTIFICATION BY MASS SPECTROMETRY [LARGE SCALE ANALYSIS]</scope>
    <source>
        <tissue>Cervix carcinoma</tissue>
    </source>
</reference>
<reference key="14">
    <citation type="journal article" date="2011" name="BMC Syst. Biol.">
        <title>Initial characterization of the human central proteome.</title>
        <authorList>
            <person name="Burkard T.R."/>
            <person name="Planyavsky M."/>
            <person name="Kaupe I."/>
            <person name="Breitwieser F.P."/>
            <person name="Buerckstuemmer T."/>
            <person name="Bennett K.L."/>
            <person name="Superti-Furga G."/>
            <person name="Colinge J."/>
        </authorList>
    </citation>
    <scope>IDENTIFICATION BY MASS SPECTROMETRY [LARGE SCALE ANALYSIS]</scope>
</reference>
<reference key="15">
    <citation type="journal article" date="2011" name="Sci. Signal.">
        <title>System-wide temporal characterization of the proteome and phosphoproteome of human embryonic stem cell differentiation.</title>
        <authorList>
            <person name="Rigbolt K.T."/>
            <person name="Prokhorova T.A."/>
            <person name="Akimov V."/>
            <person name="Henningsen J."/>
            <person name="Johansen P.T."/>
            <person name="Kratchmarova I."/>
            <person name="Kassem M."/>
            <person name="Mann M."/>
            <person name="Olsen J.V."/>
            <person name="Blagoev B."/>
        </authorList>
    </citation>
    <scope>PHOSPHORYLATION [LARGE SCALE ANALYSIS] AT SER-791</scope>
    <scope>IDENTIFICATION BY MASS SPECTROMETRY [LARGE SCALE ANALYSIS]</scope>
</reference>
<reference key="16">
    <citation type="journal article" date="2012" name="Mol. Cell. Biol.">
        <title>Rab GTPase-activating proteins in autophagy: regulation of endocytic and autophagy pathways by direct binding to human ATG8 modifiers.</title>
        <authorList>
            <person name="Popovic D."/>
            <person name="Akutsu M."/>
            <person name="Novak I."/>
            <person name="Harper J.W."/>
            <person name="Behrends C."/>
            <person name="Dikic I."/>
        </authorList>
    </citation>
    <scope>FUNCTION</scope>
    <scope>INTERACTION WITH MAP1LC3A; MAP1LC3B; MAP1LC3C; GABARAP; GABARAPL1; GABARAPL2; VPS35 AND VPS29</scope>
    <scope>SUBCELLULAR LOCATION</scope>
    <scope>DOMAIN</scope>
    <scope>MUTAGENESIS OF TRP-59</scope>
</reference>
<reference key="17">
    <citation type="journal article" date="2013" name="J. Cell Sci.">
        <title>The LIR motif - crucial for selective autophagy.</title>
        <authorList>
            <person name="Birgisdottir A.B."/>
            <person name="Lamark T."/>
            <person name="Johansen T."/>
        </authorList>
    </citation>
    <scope>DOMAIN</scope>
    <scope>LIR MOTIF</scope>
</reference>
<reference key="18">
    <citation type="journal article" date="2013" name="J. Proteome Res.">
        <title>Toward a comprehensive characterization of a human cancer cell phosphoproteome.</title>
        <authorList>
            <person name="Zhou H."/>
            <person name="Di Palma S."/>
            <person name="Preisinger C."/>
            <person name="Peng M."/>
            <person name="Polat A.N."/>
            <person name="Heck A.J."/>
            <person name="Mohammed S."/>
        </authorList>
    </citation>
    <scope>PHOSPHORYLATION [LARGE SCALE ANALYSIS] AT SER-43; SER-44; SER-460; SER-522; SER-541; SER-544; SER-554; SER-570 AND SER-730</scope>
    <scope>IDENTIFICATION BY MASS SPECTROMETRY [LARGE SCALE ANALYSIS]</scope>
    <source>
        <tissue>Cervix carcinoma</tissue>
        <tissue>Erythroleukemia</tissue>
    </source>
</reference>
<reference key="19">
    <citation type="journal article" date="2014" name="EMBO Rep.">
        <title>TBC1D5 and the AP2 complex regulate ATG9 trafficking and initiation of autophagy.</title>
        <authorList>
            <person name="Popovic D."/>
            <person name="Dikic I."/>
        </authorList>
    </citation>
    <scope>FUNCTION</scope>
    <scope>INTERACTION WITH ATG9A; ULK1; ATG13 AND AP2M1</scope>
</reference>
<reference key="20">
    <citation type="journal article" date="2014" name="J. Proteomics">
        <title>An enzyme assisted RP-RPLC approach for in-depth analysis of human liver phosphoproteome.</title>
        <authorList>
            <person name="Bian Y."/>
            <person name="Song C."/>
            <person name="Cheng K."/>
            <person name="Dong M."/>
            <person name="Wang F."/>
            <person name="Huang J."/>
            <person name="Sun D."/>
            <person name="Wang L."/>
            <person name="Ye M."/>
            <person name="Zou H."/>
        </authorList>
    </citation>
    <scope>PHOSPHORYLATION [LARGE SCALE ANALYSIS] AT SER-522; SER-539; SER-541 AND SER-544</scope>
    <scope>IDENTIFICATION BY MASS SPECTROMETRY [LARGE SCALE ANALYSIS]</scope>
    <source>
        <tissue>Liver</tissue>
    </source>
</reference>
<dbReference type="EMBL" id="D86965">
    <property type="protein sequence ID" value="BAA13201.2"/>
    <property type="status" value="ALT_INIT"/>
    <property type="molecule type" value="mRNA"/>
</dbReference>
<dbReference type="EMBL" id="AK310539">
    <property type="status" value="NOT_ANNOTATED_CDS"/>
    <property type="molecule type" value="mRNA"/>
</dbReference>
<dbReference type="EMBL" id="AC090644">
    <property type="status" value="NOT_ANNOTATED_CDS"/>
    <property type="molecule type" value="Genomic_DNA"/>
</dbReference>
<dbReference type="EMBL" id="AC090960">
    <property type="status" value="NOT_ANNOTATED_CDS"/>
    <property type="molecule type" value="Genomic_DNA"/>
</dbReference>
<dbReference type="EMBL" id="AC099543">
    <property type="status" value="NOT_ANNOTATED_CDS"/>
    <property type="molecule type" value="Genomic_DNA"/>
</dbReference>
<dbReference type="EMBL" id="AC104297">
    <property type="status" value="NOT_ANNOTATED_CDS"/>
    <property type="molecule type" value="Genomic_DNA"/>
</dbReference>
<dbReference type="EMBL" id="AC104451">
    <property type="status" value="NOT_ANNOTATED_CDS"/>
    <property type="molecule type" value="Genomic_DNA"/>
</dbReference>
<dbReference type="EMBL" id="AC132807">
    <property type="status" value="NOT_ANNOTATED_CDS"/>
    <property type="molecule type" value="Genomic_DNA"/>
</dbReference>
<dbReference type="EMBL" id="AC137672">
    <property type="status" value="NOT_ANNOTATED_CDS"/>
    <property type="molecule type" value="Genomic_DNA"/>
</dbReference>
<dbReference type="EMBL" id="AC139618">
    <property type="status" value="NOT_ANNOTATED_CDS"/>
    <property type="molecule type" value="Genomic_DNA"/>
</dbReference>
<dbReference type="EMBL" id="AC140076">
    <property type="status" value="NOT_ANNOTATED_CDS"/>
    <property type="molecule type" value="Genomic_DNA"/>
</dbReference>
<dbReference type="EMBL" id="AC144521">
    <property type="status" value="NOT_ANNOTATED_CDS"/>
    <property type="molecule type" value="Genomic_DNA"/>
</dbReference>
<dbReference type="EMBL" id="AC144531">
    <property type="status" value="NOT_ANNOTATED_CDS"/>
    <property type="molecule type" value="Genomic_DNA"/>
</dbReference>
<dbReference type="EMBL" id="BC013145">
    <property type="protein sequence ID" value="AAH13145.1"/>
    <property type="molecule type" value="mRNA"/>
</dbReference>
<dbReference type="CCDS" id="CCDS33714.1">
    <molecule id="Q92609-1"/>
</dbReference>
<dbReference type="CCDS" id="CCDS46770.1">
    <molecule id="Q92609-2"/>
</dbReference>
<dbReference type="RefSeq" id="NP_001127853.1">
    <molecule id="Q92609-2"/>
    <property type="nucleotide sequence ID" value="NM_001134381.2"/>
</dbReference>
<dbReference type="RefSeq" id="NP_001336002.1">
    <molecule id="Q92609-2"/>
    <property type="nucleotide sequence ID" value="NM_001349073.2"/>
</dbReference>
<dbReference type="RefSeq" id="NP_001336003.1">
    <molecule id="Q92609-2"/>
    <property type="nucleotide sequence ID" value="NM_001349074.2"/>
</dbReference>
<dbReference type="RefSeq" id="NP_001336004.1">
    <molecule id="Q92609-2"/>
    <property type="nucleotide sequence ID" value="NM_001349075.2"/>
</dbReference>
<dbReference type="RefSeq" id="NP_001336005.1">
    <molecule id="Q92609-1"/>
    <property type="nucleotide sequence ID" value="NM_001349076.2"/>
</dbReference>
<dbReference type="RefSeq" id="NP_001336006.1">
    <molecule id="Q92609-1"/>
    <property type="nucleotide sequence ID" value="NM_001349077.2"/>
</dbReference>
<dbReference type="RefSeq" id="NP_001336007.1">
    <molecule id="Q92609-1"/>
    <property type="nucleotide sequence ID" value="NM_001349078.2"/>
</dbReference>
<dbReference type="RefSeq" id="NP_001336008.1">
    <molecule id="Q92609-1"/>
    <property type="nucleotide sequence ID" value="NM_001349079.2"/>
</dbReference>
<dbReference type="RefSeq" id="NP_001336009.1">
    <molecule id="Q92609-1"/>
    <property type="nucleotide sequence ID" value="NM_001349080.2"/>
</dbReference>
<dbReference type="RefSeq" id="NP_055559.1">
    <molecule id="Q92609-1"/>
    <property type="nucleotide sequence ID" value="NM_014744.2"/>
</dbReference>
<dbReference type="RefSeq" id="XP_006713493.1">
    <property type="nucleotide sequence ID" value="XM_006713430.1"/>
</dbReference>
<dbReference type="RefSeq" id="XP_011532583.1">
    <molecule id="Q92609-2"/>
    <property type="nucleotide sequence ID" value="XM_011534281.2"/>
</dbReference>
<dbReference type="RefSeq" id="XP_011532585.1">
    <molecule id="Q92609-2"/>
    <property type="nucleotide sequence ID" value="XM_011534283.4"/>
</dbReference>
<dbReference type="RefSeq" id="XP_011532586.1">
    <molecule id="Q92609-2"/>
    <property type="nucleotide sequence ID" value="XM_011534284.3"/>
</dbReference>
<dbReference type="RefSeq" id="XP_016863041.1">
    <property type="nucleotide sequence ID" value="XM_017007552.1"/>
</dbReference>
<dbReference type="RefSeq" id="XP_016863042.1">
    <molecule id="Q92609-2"/>
    <property type="nucleotide sequence ID" value="XM_017007553.3"/>
</dbReference>
<dbReference type="RefSeq" id="XP_016863043.1">
    <property type="nucleotide sequence ID" value="XM_017007554.1"/>
</dbReference>
<dbReference type="RefSeq" id="XP_016863044.1">
    <molecule id="Q92609-2"/>
    <property type="nucleotide sequence ID" value="XM_017007555.3"/>
</dbReference>
<dbReference type="RefSeq" id="XP_016863045.1">
    <molecule id="Q92609-2"/>
    <property type="nucleotide sequence ID" value="XM_017007556.2"/>
</dbReference>
<dbReference type="RefSeq" id="XP_016863046.1">
    <property type="nucleotide sequence ID" value="XM_017007557.1"/>
</dbReference>
<dbReference type="RefSeq" id="XP_047305240.1">
    <molecule id="Q92609-2"/>
    <property type="nucleotide sequence ID" value="XM_047449284.1"/>
</dbReference>
<dbReference type="RefSeq" id="XP_047305241.1">
    <molecule id="Q92609-2"/>
    <property type="nucleotide sequence ID" value="XM_047449285.1"/>
</dbReference>
<dbReference type="RefSeq" id="XP_047305242.1">
    <molecule id="Q92609-2"/>
    <property type="nucleotide sequence ID" value="XM_047449286.1"/>
</dbReference>
<dbReference type="RefSeq" id="XP_047305243.1">
    <molecule id="Q92609-2"/>
    <property type="nucleotide sequence ID" value="XM_047449287.1"/>
</dbReference>
<dbReference type="RefSeq" id="XP_047305244.1">
    <molecule id="Q92609-2"/>
    <property type="nucleotide sequence ID" value="XM_047449288.1"/>
</dbReference>
<dbReference type="RefSeq" id="XP_047305245.1">
    <molecule id="Q92609-2"/>
    <property type="nucleotide sequence ID" value="XM_047449289.1"/>
</dbReference>
<dbReference type="RefSeq" id="XP_047305246.1">
    <molecule id="Q92609-2"/>
    <property type="nucleotide sequence ID" value="XM_047449290.1"/>
</dbReference>
<dbReference type="RefSeq" id="XP_047305247.1">
    <molecule id="Q92609-1"/>
    <property type="nucleotide sequence ID" value="XM_047449291.1"/>
</dbReference>
<dbReference type="RefSeq" id="XP_047305248.1">
    <molecule id="Q92609-1"/>
    <property type="nucleotide sequence ID" value="XM_047449292.1"/>
</dbReference>
<dbReference type="RefSeq" id="XP_047305249.1">
    <molecule id="Q92609-1"/>
    <property type="nucleotide sequence ID" value="XM_047449293.1"/>
</dbReference>
<dbReference type="RefSeq" id="XP_047305250.1">
    <molecule id="Q92609-1"/>
    <property type="nucleotide sequence ID" value="XM_047449294.1"/>
</dbReference>
<dbReference type="RefSeq" id="XP_047305251.1">
    <molecule id="Q92609-1"/>
    <property type="nucleotide sequence ID" value="XM_047449295.1"/>
</dbReference>
<dbReference type="RefSeq" id="XP_047305252.1">
    <molecule id="Q92609-1"/>
    <property type="nucleotide sequence ID" value="XM_047449296.1"/>
</dbReference>
<dbReference type="RefSeq" id="XP_047305253.1">
    <molecule id="Q92609-1"/>
    <property type="nucleotide sequence ID" value="XM_047449297.1"/>
</dbReference>
<dbReference type="RefSeq" id="XP_047305254.1">
    <molecule id="Q92609-1"/>
    <property type="nucleotide sequence ID" value="XM_047449298.1"/>
</dbReference>
<dbReference type="RefSeq" id="XP_047305255.1">
    <molecule id="Q92609-1"/>
    <property type="nucleotide sequence ID" value="XM_047449299.1"/>
</dbReference>
<dbReference type="RefSeq" id="XP_047305256.1">
    <molecule id="Q92609-1"/>
    <property type="nucleotide sequence ID" value="XM_047449300.1"/>
</dbReference>
<dbReference type="RefSeq" id="XP_047305257.1">
    <molecule id="Q92609-1"/>
    <property type="nucleotide sequence ID" value="XM_047449301.1"/>
</dbReference>
<dbReference type="RefSeq" id="XP_047305258.1">
    <molecule id="Q92609-1"/>
    <property type="nucleotide sequence ID" value="XM_047449302.1"/>
</dbReference>
<dbReference type="RefSeq" id="XP_047305259.1">
    <molecule id="Q92609-1"/>
    <property type="nucleotide sequence ID" value="XM_047449303.1"/>
</dbReference>
<dbReference type="RefSeq" id="XP_047305260.1">
    <molecule id="Q92609-1"/>
    <property type="nucleotide sequence ID" value="XM_047449304.1"/>
</dbReference>
<dbReference type="RefSeq" id="XP_047305261.1">
    <molecule id="Q92609-1"/>
    <property type="nucleotide sequence ID" value="XM_047449305.1"/>
</dbReference>
<dbReference type="RefSeq" id="XP_047305262.1">
    <molecule id="Q92609-1"/>
    <property type="nucleotide sequence ID" value="XM_047449306.1"/>
</dbReference>
<dbReference type="RefSeq" id="XP_047305264.1">
    <molecule id="Q92609-1"/>
    <property type="nucleotide sequence ID" value="XM_047449308.1"/>
</dbReference>
<dbReference type="RefSeq" id="XP_047305265.1">
    <molecule id="Q92609-1"/>
    <property type="nucleotide sequence ID" value="XM_047449309.1"/>
</dbReference>
<dbReference type="RefSeq" id="XP_047305266.1">
    <molecule id="Q92609-1"/>
    <property type="nucleotide sequence ID" value="XM_047449310.1"/>
</dbReference>
<dbReference type="RefSeq" id="XP_047305267.1">
    <molecule id="Q92609-1"/>
    <property type="nucleotide sequence ID" value="XM_047449311.1"/>
</dbReference>
<dbReference type="RefSeq" id="XP_047305268.1">
    <molecule id="Q92609-1"/>
    <property type="nucleotide sequence ID" value="XM_047449312.1"/>
</dbReference>
<dbReference type="RefSeq" id="XP_047305269.1">
    <molecule id="Q92609-1"/>
    <property type="nucleotide sequence ID" value="XM_047449313.1"/>
</dbReference>
<dbReference type="RefSeq" id="XP_047305270.1">
    <molecule id="Q92609-1"/>
    <property type="nucleotide sequence ID" value="XM_047449314.1"/>
</dbReference>
<dbReference type="RefSeq" id="XP_047305271.1">
    <molecule id="Q92609-1"/>
    <property type="nucleotide sequence ID" value="XM_047449315.1"/>
</dbReference>
<dbReference type="RefSeq" id="XP_047305272.1">
    <molecule id="Q92609-1"/>
    <property type="nucleotide sequence ID" value="XM_047449316.1"/>
</dbReference>
<dbReference type="RefSeq" id="XP_047305273.1">
    <molecule id="Q92609-1"/>
    <property type="nucleotide sequence ID" value="XM_047449317.1"/>
</dbReference>
<dbReference type="RefSeq" id="XP_047305274.1">
    <molecule id="Q92609-1"/>
    <property type="nucleotide sequence ID" value="XM_047449318.1"/>
</dbReference>
<dbReference type="RefSeq" id="XP_047305275.1">
    <molecule id="Q92609-1"/>
    <property type="nucleotide sequence ID" value="XM_047449319.1"/>
</dbReference>
<dbReference type="RefSeq" id="XP_054204513.1">
    <molecule id="Q92609-2"/>
    <property type="nucleotide sequence ID" value="XM_054348538.1"/>
</dbReference>
<dbReference type="RefSeq" id="XP_054204514.1">
    <molecule id="Q92609-2"/>
    <property type="nucleotide sequence ID" value="XM_054348539.1"/>
</dbReference>
<dbReference type="RefSeq" id="XP_054204515.1">
    <molecule id="Q92609-2"/>
    <property type="nucleotide sequence ID" value="XM_054348540.1"/>
</dbReference>
<dbReference type="RefSeq" id="XP_054204516.1">
    <molecule id="Q92609-2"/>
    <property type="nucleotide sequence ID" value="XM_054348541.1"/>
</dbReference>
<dbReference type="RefSeq" id="XP_054204517.1">
    <molecule id="Q92609-2"/>
    <property type="nucleotide sequence ID" value="XM_054348542.1"/>
</dbReference>
<dbReference type="RefSeq" id="XP_054204518.1">
    <molecule id="Q92609-2"/>
    <property type="nucleotide sequence ID" value="XM_054348543.1"/>
</dbReference>
<dbReference type="RefSeq" id="XP_054204519.1">
    <molecule id="Q92609-2"/>
    <property type="nucleotide sequence ID" value="XM_054348544.1"/>
</dbReference>
<dbReference type="RefSeq" id="XP_054204520.1">
    <molecule id="Q92609-2"/>
    <property type="nucleotide sequence ID" value="XM_054348545.1"/>
</dbReference>
<dbReference type="RefSeq" id="XP_054204521.1">
    <molecule id="Q92609-2"/>
    <property type="nucleotide sequence ID" value="XM_054348546.1"/>
</dbReference>
<dbReference type="RefSeq" id="XP_054204522.1">
    <molecule id="Q92609-2"/>
    <property type="nucleotide sequence ID" value="XM_054348547.1"/>
</dbReference>
<dbReference type="RefSeq" id="XP_054204523.1">
    <molecule id="Q92609-2"/>
    <property type="nucleotide sequence ID" value="XM_054348548.1"/>
</dbReference>
<dbReference type="RefSeq" id="XP_054204524.1">
    <molecule id="Q92609-2"/>
    <property type="nucleotide sequence ID" value="XM_054348549.1"/>
</dbReference>
<dbReference type="RefSeq" id="XP_054204525.1">
    <molecule id="Q92609-2"/>
    <property type="nucleotide sequence ID" value="XM_054348550.1"/>
</dbReference>
<dbReference type="RefSeq" id="XP_054204526.1">
    <molecule id="Q92609-1"/>
    <property type="nucleotide sequence ID" value="XM_054348551.1"/>
</dbReference>
<dbReference type="RefSeq" id="XP_054204527.1">
    <molecule id="Q92609-1"/>
    <property type="nucleotide sequence ID" value="XM_054348552.1"/>
</dbReference>
<dbReference type="RefSeq" id="XP_054204528.1">
    <molecule id="Q92609-1"/>
    <property type="nucleotide sequence ID" value="XM_054348553.1"/>
</dbReference>
<dbReference type="RefSeq" id="XP_054204529.1">
    <molecule id="Q92609-1"/>
    <property type="nucleotide sequence ID" value="XM_054348554.1"/>
</dbReference>
<dbReference type="RefSeq" id="XP_054204530.1">
    <molecule id="Q92609-1"/>
    <property type="nucleotide sequence ID" value="XM_054348555.1"/>
</dbReference>
<dbReference type="RefSeq" id="XP_054204531.1">
    <molecule id="Q92609-1"/>
    <property type="nucleotide sequence ID" value="XM_054348556.1"/>
</dbReference>
<dbReference type="RefSeq" id="XP_054204532.1">
    <molecule id="Q92609-1"/>
    <property type="nucleotide sequence ID" value="XM_054348557.1"/>
</dbReference>
<dbReference type="RefSeq" id="XP_054204533.1">
    <molecule id="Q92609-1"/>
    <property type="nucleotide sequence ID" value="XM_054348558.1"/>
</dbReference>
<dbReference type="RefSeq" id="XP_054204534.1">
    <molecule id="Q92609-1"/>
    <property type="nucleotide sequence ID" value="XM_054348559.1"/>
</dbReference>
<dbReference type="RefSeq" id="XP_054204535.1">
    <molecule id="Q92609-1"/>
    <property type="nucleotide sequence ID" value="XM_054348560.1"/>
</dbReference>
<dbReference type="RefSeq" id="XP_054204536.1">
    <molecule id="Q92609-1"/>
    <property type="nucleotide sequence ID" value="XM_054348561.1"/>
</dbReference>
<dbReference type="RefSeq" id="XP_054204537.1">
    <molecule id="Q92609-1"/>
    <property type="nucleotide sequence ID" value="XM_054348562.1"/>
</dbReference>
<dbReference type="RefSeq" id="XP_054204538.1">
    <molecule id="Q92609-1"/>
    <property type="nucleotide sequence ID" value="XM_054348563.1"/>
</dbReference>
<dbReference type="RefSeq" id="XP_054204539.1">
    <molecule id="Q92609-1"/>
    <property type="nucleotide sequence ID" value="XM_054348564.1"/>
</dbReference>
<dbReference type="RefSeq" id="XP_054204540.1">
    <molecule id="Q92609-1"/>
    <property type="nucleotide sequence ID" value="XM_054348565.1"/>
</dbReference>
<dbReference type="RefSeq" id="XP_054204541.1">
    <molecule id="Q92609-1"/>
    <property type="nucleotide sequence ID" value="XM_054348566.1"/>
</dbReference>
<dbReference type="RefSeq" id="XP_054204542.1">
    <molecule id="Q92609-1"/>
    <property type="nucleotide sequence ID" value="XM_054348567.1"/>
</dbReference>
<dbReference type="RefSeq" id="XP_054204543.1">
    <molecule id="Q92609-1"/>
    <property type="nucleotide sequence ID" value="XM_054348568.1"/>
</dbReference>
<dbReference type="RefSeq" id="XP_054204544.1">
    <molecule id="Q92609-1"/>
    <property type="nucleotide sequence ID" value="XM_054348569.1"/>
</dbReference>
<dbReference type="RefSeq" id="XP_054204545.1">
    <molecule id="Q92609-1"/>
    <property type="nucleotide sequence ID" value="XM_054348570.1"/>
</dbReference>
<dbReference type="RefSeq" id="XP_054204546.1">
    <molecule id="Q92609-1"/>
    <property type="nucleotide sequence ID" value="XM_054348571.1"/>
</dbReference>
<dbReference type="RefSeq" id="XP_054204547.1">
    <molecule id="Q92609-1"/>
    <property type="nucleotide sequence ID" value="XM_054348572.1"/>
</dbReference>
<dbReference type="RefSeq" id="XP_054204548.1">
    <molecule id="Q92609-1"/>
    <property type="nucleotide sequence ID" value="XM_054348573.1"/>
</dbReference>
<dbReference type="RefSeq" id="XP_054204549.1">
    <molecule id="Q92609-1"/>
    <property type="nucleotide sequence ID" value="XM_054348574.1"/>
</dbReference>
<dbReference type="RefSeq" id="XP_054204550.1">
    <molecule id="Q92609-1"/>
    <property type="nucleotide sequence ID" value="XM_054348575.1"/>
</dbReference>
<dbReference type="RefSeq" id="XP_054204551.1">
    <molecule id="Q92609-1"/>
    <property type="nucleotide sequence ID" value="XM_054348576.1"/>
</dbReference>
<dbReference type="RefSeq" id="XP_054204552.1">
    <molecule id="Q92609-1"/>
    <property type="nucleotide sequence ID" value="XM_054348577.1"/>
</dbReference>
<dbReference type="RefSeq" id="XP_054204553.1">
    <molecule id="Q92609-1"/>
    <property type="nucleotide sequence ID" value="XM_054348578.1"/>
</dbReference>
<dbReference type="PDB" id="5GTU">
    <property type="method" value="X-ray"/>
    <property type="resolution" value="1.50 A"/>
    <property type="chains" value="B=132-158"/>
</dbReference>
<dbReference type="PDBsum" id="5GTU"/>
<dbReference type="SMR" id="Q92609"/>
<dbReference type="BioGRID" id="115123">
    <property type="interactions" value="98"/>
</dbReference>
<dbReference type="ELM" id="Q92609"/>
<dbReference type="FunCoup" id="Q92609">
    <property type="interactions" value="3625"/>
</dbReference>
<dbReference type="IntAct" id="Q92609">
    <property type="interactions" value="62"/>
</dbReference>
<dbReference type="MINT" id="Q92609"/>
<dbReference type="STRING" id="9606.ENSP00000402935"/>
<dbReference type="TCDB" id="8.A.87.2.1">
    <property type="family name" value="the tbc1 domain (tbc1) family"/>
</dbReference>
<dbReference type="GlyCosmos" id="Q92609">
    <property type="glycosylation" value="2 sites, 1 glycan"/>
</dbReference>
<dbReference type="GlyGen" id="Q92609">
    <property type="glycosylation" value="5 sites, 2 N-linked glycans (2 sites), 1 O-linked glycan (3 sites)"/>
</dbReference>
<dbReference type="iPTMnet" id="Q92609"/>
<dbReference type="MetOSite" id="Q92609"/>
<dbReference type="PhosphoSitePlus" id="Q92609"/>
<dbReference type="SwissPalm" id="Q92609"/>
<dbReference type="BioMuta" id="TBC1D5"/>
<dbReference type="DMDM" id="2495720"/>
<dbReference type="jPOST" id="Q92609"/>
<dbReference type="MassIVE" id="Q92609"/>
<dbReference type="PaxDb" id="9606-ENSP00000402935"/>
<dbReference type="PeptideAtlas" id="Q92609"/>
<dbReference type="ProteomicsDB" id="11067"/>
<dbReference type="ProteomicsDB" id="75354">
    <molecule id="Q92609-1"/>
</dbReference>
<dbReference type="Pumba" id="Q92609"/>
<dbReference type="Antibodypedia" id="45185">
    <property type="antibodies" value="52 antibodies from 19 providers"/>
</dbReference>
<dbReference type="DNASU" id="9779"/>
<dbReference type="Ensembl" id="ENST00000253692.11">
    <molecule id="Q92609-1"/>
    <property type="protein sequence ID" value="ENSP00000253692.6"/>
    <property type="gene ID" value="ENSG00000131374.15"/>
</dbReference>
<dbReference type="Ensembl" id="ENST00000429383.8">
    <molecule id="Q92609-1"/>
    <property type="protein sequence ID" value="ENSP00000398127.4"/>
    <property type="gene ID" value="ENSG00000131374.15"/>
</dbReference>
<dbReference type="Ensembl" id="ENST00000446818.6">
    <molecule id="Q92609-2"/>
    <property type="protein sequence ID" value="ENSP00000402935.2"/>
    <property type="gene ID" value="ENSG00000131374.15"/>
</dbReference>
<dbReference type="Ensembl" id="ENST00000696125.1">
    <molecule id="Q92609-2"/>
    <property type="protein sequence ID" value="ENSP00000512418.1"/>
    <property type="gene ID" value="ENSG00000131374.15"/>
</dbReference>
<dbReference type="GeneID" id="9779"/>
<dbReference type="KEGG" id="hsa:9779"/>
<dbReference type="MANE-Select" id="ENST00000696125.1">
    <molecule id="Q92609-2"/>
    <property type="protein sequence ID" value="ENSP00000512418.1"/>
    <property type="RefSeq nucleotide sequence ID" value="NM_001349074.2"/>
    <property type="RefSeq protein sequence ID" value="NP_001336003.1"/>
</dbReference>
<dbReference type="UCSC" id="uc003cbf.3">
    <molecule id="Q92609-1"/>
    <property type="organism name" value="human"/>
</dbReference>
<dbReference type="AGR" id="HGNC:19166"/>
<dbReference type="CTD" id="9779"/>
<dbReference type="DisGeNET" id="9779"/>
<dbReference type="GeneCards" id="TBC1D5"/>
<dbReference type="HGNC" id="HGNC:19166">
    <property type="gene designation" value="TBC1D5"/>
</dbReference>
<dbReference type="HPA" id="ENSG00000131374">
    <property type="expression patterns" value="Low tissue specificity"/>
</dbReference>
<dbReference type="MIM" id="615740">
    <property type="type" value="gene"/>
</dbReference>
<dbReference type="neXtProt" id="NX_Q92609"/>
<dbReference type="OpenTargets" id="ENSG00000131374"/>
<dbReference type="PharmGKB" id="PA38808"/>
<dbReference type="VEuPathDB" id="HostDB:ENSG00000131374"/>
<dbReference type="eggNOG" id="KOG1091">
    <property type="taxonomic scope" value="Eukaryota"/>
</dbReference>
<dbReference type="GeneTree" id="ENSGT00940000157121"/>
<dbReference type="HOGENOM" id="CLU_020460_1_0_1"/>
<dbReference type="InParanoid" id="Q92609"/>
<dbReference type="OMA" id="PWNQYFQ"/>
<dbReference type="OrthoDB" id="27140at2759"/>
<dbReference type="PAN-GO" id="Q92609">
    <property type="GO annotations" value="2 GO annotations based on evolutionary models"/>
</dbReference>
<dbReference type="PhylomeDB" id="Q92609"/>
<dbReference type="TreeFam" id="TF105784"/>
<dbReference type="PathwayCommons" id="Q92609"/>
<dbReference type="SignaLink" id="Q92609"/>
<dbReference type="BioGRID-ORCS" id="9779">
    <property type="hits" value="18 hits in 1158 CRISPR screens"/>
</dbReference>
<dbReference type="ChiTaRS" id="TBC1D5">
    <property type="organism name" value="human"/>
</dbReference>
<dbReference type="GenomeRNAi" id="9779"/>
<dbReference type="Pharos" id="Q92609">
    <property type="development level" value="Tbio"/>
</dbReference>
<dbReference type="PRO" id="PR:Q92609"/>
<dbReference type="Proteomes" id="UP000005640">
    <property type="component" value="Chromosome 3"/>
</dbReference>
<dbReference type="RNAct" id="Q92609">
    <property type="molecule type" value="protein"/>
</dbReference>
<dbReference type="Bgee" id="ENSG00000131374">
    <property type="expression patterns" value="Expressed in calcaneal tendon and 197 other cell types or tissues"/>
</dbReference>
<dbReference type="ExpressionAtlas" id="Q92609">
    <property type="expression patterns" value="baseline and differential"/>
</dbReference>
<dbReference type="GO" id="GO:0005776">
    <property type="term" value="C:autophagosome"/>
    <property type="evidence" value="ECO:0000314"/>
    <property type="project" value="UniProtKB"/>
</dbReference>
<dbReference type="GO" id="GO:0005829">
    <property type="term" value="C:cytosol"/>
    <property type="evidence" value="ECO:0007669"/>
    <property type="project" value="GOC"/>
</dbReference>
<dbReference type="GO" id="GO:0010008">
    <property type="term" value="C:endosome membrane"/>
    <property type="evidence" value="ECO:0000314"/>
    <property type="project" value="UniProtKB"/>
</dbReference>
<dbReference type="GO" id="GO:0005794">
    <property type="term" value="C:Golgi apparatus"/>
    <property type="evidence" value="ECO:0000314"/>
    <property type="project" value="HPA"/>
</dbReference>
<dbReference type="GO" id="GO:0043231">
    <property type="term" value="C:intracellular membrane-bounded organelle"/>
    <property type="evidence" value="ECO:0000314"/>
    <property type="project" value="HPA"/>
</dbReference>
<dbReference type="GO" id="GO:0030904">
    <property type="term" value="C:retromer complex"/>
    <property type="evidence" value="ECO:0000314"/>
    <property type="project" value="MGI"/>
</dbReference>
<dbReference type="GO" id="GO:0035612">
    <property type="term" value="F:AP-2 adaptor complex binding"/>
    <property type="evidence" value="ECO:0000314"/>
    <property type="project" value="UniProtKB"/>
</dbReference>
<dbReference type="GO" id="GO:0005096">
    <property type="term" value="F:GTPase activator activity"/>
    <property type="evidence" value="ECO:0000318"/>
    <property type="project" value="GO_Central"/>
</dbReference>
<dbReference type="GO" id="GO:0044877">
    <property type="term" value="F:protein-containing complex binding"/>
    <property type="evidence" value="ECO:0000314"/>
    <property type="project" value="GO_Central"/>
</dbReference>
<dbReference type="GO" id="GO:1905394">
    <property type="term" value="F:retromer complex binding"/>
    <property type="evidence" value="ECO:0000315"/>
    <property type="project" value="ParkinsonsUK-UCL"/>
</dbReference>
<dbReference type="GO" id="GO:0006914">
    <property type="term" value="P:autophagy"/>
    <property type="evidence" value="ECO:0000314"/>
    <property type="project" value="GO_Central"/>
</dbReference>
<dbReference type="GO" id="GO:0016236">
    <property type="term" value="P:macroautophagy"/>
    <property type="evidence" value="ECO:0000315"/>
    <property type="project" value="ParkinsonsUK-UCL"/>
</dbReference>
<dbReference type="GO" id="GO:0002092">
    <property type="term" value="P:positive regulation of receptor internalization"/>
    <property type="evidence" value="ECO:0000315"/>
    <property type="project" value="UniProtKB"/>
</dbReference>
<dbReference type="GO" id="GO:0015031">
    <property type="term" value="P:protein transport"/>
    <property type="evidence" value="ECO:0007669"/>
    <property type="project" value="UniProtKB-KW"/>
</dbReference>
<dbReference type="GO" id="GO:0042594">
    <property type="term" value="P:response to starvation"/>
    <property type="evidence" value="ECO:0000314"/>
    <property type="project" value="UniProtKB"/>
</dbReference>
<dbReference type="GO" id="GO:0042147">
    <property type="term" value="P:retrograde transport, endosome to Golgi"/>
    <property type="evidence" value="ECO:0000315"/>
    <property type="project" value="UniProtKB"/>
</dbReference>
<dbReference type="FunFam" id="1.10.472.80:FF:000010">
    <property type="entry name" value="Putative TBC1 domain family member 5"/>
    <property type="match status" value="1"/>
</dbReference>
<dbReference type="FunFam" id="1.10.8.270:FF:000011">
    <property type="entry name" value="TBC1 domain family member 5"/>
    <property type="match status" value="1"/>
</dbReference>
<dbReference type="Gene3D" id="1.10.8.270">
    <property type="entry name" value="putative rabgap domain of human tbc1 domain family member 14 like domains"/>
    <property type="match status" value="1"/>
</dbReference>
<dbReference type="Gene3D" id="1.10.472.80">
    <property type="entry name" value="Ypt/Rab-GAP domain of gyp1p, domain 3"/>
    <property type="match status" value="1"/>
</dbReference>
<dbReference type="InterPro" id="IPR000195">
    <property type="entry name" value="Rab-GAP-TBC_dom"/>
</dbReference>
<dbReference type="InterPro" id="IPR035969">
    <property type="entry name" value="Rab-GAP_TBC_sf"/>
</dbReference>
<dbReference type="PANTHER" id="PTHR22957:SF337">
    <property type="entry name" value="TBC1 DOMAIN FAMILY MEMBER 5"/>
    <property type="match status" value="1"/>
</dbReference>
<dbReference type="PANTHER" id="PTHR22957">
    <property type="entry name" value="TBC1 DOMAIN FAMILY MEMBER GTPASE-ACTIVATING PROTEIN"/>
    <property type="match status" value="1"/>
</dbReference>
<dbReference type="Pfam" id="PF00566">
    <property type="entry name" value="RabGAP-TBC"/>
    <property type="match status" value="2"/>
</dbReference>
<dbReference type="SMART" id="SM00164">
    <property type="entry name" value="TBC"/>
    <property type="match status" value="1"/>
</dbReference>
<dbReference type="SUPFAM" id="SSF47923">
    <property type="entry name" value="Ypt/Rab-GAP domain of gyp1p"/>
    <property type="match status" value="2"/>
</dbReference>
<dbReference type="PROSITE" id="PS50086">
    <property type="entry name" value="TBC_RABGAP"/>
    <property type="match status" value="1"/>
</dbReference>
<proteinExistence type="evidence at protein level"/>
<accession>Q92609</accession>
<accession>A6NP25</accession>
<accession>C9JP52</accession>
<sequence>MYHSLSETRHPLQPEEQEVGIDPLSSYSNKSGGDSNKNGRRTSSTLDSEGTFNSYRKEWEELFVNNNYLATIRQKGINGQLRSSRFRSICWKLFLCVLPQDKSQWISRIEELRAWYSNIKEIHITNPRKVVGQQDLMINNPLSQDEGSLWNKFFQDKELRSMIEQDVKRTFPEMQFFQQENVRKILTDVLFCYARENEQLLYKQGMHELLAPIVFVLHCDHQAFLHASESAQPSEEMKTVLNPEYLEHDAYAVFSQLMETAEPWFSTFEHDGQKGKETLMTPIPFARPQDLGPTIAIVTKVNQIQDHLLKKHDIELYMHLNRLEIAPQIYGLRWVRLLFGREFPLQDLLVVWDALFADGLSLGLVDYIFVAMLLYIRDALISSNYQTCLGLLMHYPFIGDVHSLILKALFLRDPKRNPRPVTYQFHPNLDYYKARGADLMNKSRTNAKGAPLNINKVSNSLINFGRKLISPAMAPGSAGGPVPGGNSSSSSSVVIPTRTSAEAPSHHLQQQQQQQRLMKSESMPVQLNKGLSSKNISSSPSVESLPGGREFTGSPPSSATKKDSFFSNISRSRSHSKTMGRKESEEELEAQISFLQGQLNDLDAMCKYCAKVMDTHLVNIQDVILQENLEKEDQILVSLAGLKQIKDILKGSLRFNQSQLEAEENEQITIADNHYCSSGQGQGRGQGQSVQMSGAIKQASSETPGCTDRGNSDDFILISKDDDGSSARGSFSGQAQPLRTLRSTSGKSQAPVCSPLVFSDPLMGPASASSSNPSSSPDDDSSKDSGFTIVSPLDI</sequence>
<evidence type="ECO:0000250" key="1">
    <source>
        <dbReference type="UniProtKB" id="Q80XQ2"/>
    </source>
</evidence>
<evidence type="ECO:0000250" key="2">
    <source>
        <dbReference type="UniProtKB" id="Q96BZ9"/>
    </source>
</evidence>
<evidence type="ECO:0000255" key="3">
    <source>
        <dbReference type="PROSITE-ProRule" id="PRU00163"/>
    </source>
</evidence>
<evidence type="ECO:0000256" key="4">
    <source>
        <dbReference type="SAM" id="MobiDB-lite"/>
    </source>
</evidence>
<evidence type="ECO:0000269" key="5">
    <source>
    </source>
</evidence>
<evidence type="ECO:0000269" key="6">
    <source>
    </source>
</evidence>
<evidence type="ECO:0000269" key="7">
    <source>
    </source>
</evidence>
<evidence type="ECO:0000269" key="8">
    <source>
    </source>
</evidence>
<evidence type="ECO:0000303" key="9">
    <source>
    </source>
</evidence>
<evidence type="ECO:0000305" key="10"/>
<evidence type="ECO:0000305" key="11">
    <source>
    </source>
</evidence>
<evidence type="ECO:0000305" key="12">
    <source>
    </source>
</evidence>
<evidence type="ECO:0000305" key="13">
    <source>
    </source>
</evidence>
<evidence type="ECO:0000305" key="14">
    <source>
    </source>
</evidence>
<evidence type="ECO:0007744" key="15">
    <source>
    </source>
</evidence>
<evidence type="ECO:0007744" key="16">
    <source>
    </source>
</evidence>
<evidence type="ECO:0007744" key="17">
    <source>
    </source>
</evidence>
<evidence type="ECO:0007744" key="18">
    <source>
    </source>
</evidence>
<evidence type="ECO:0007744" key="19">
    <source>
    </source>
</evidence>
<evidence type="ECO:0007744" key="20">
    <source>
    </source>
</evidence>
<evidence type="ECO:0007829" key="21">
    <source>
        <dbReference type="PDB" id="5GTU"/>
    </source>
</evidence>
<name>TBCD5_HUMAN</name>
<comment type="function">
    <text evidence="5 6 7 8 11 12 14">May act as a GTPase-activating protein (GAP) for Rab family protein(s). May act as a GAP for RAB7A. Can displace RAB7A and retromer CSC subcomplex from the endosomal membrane to the cytosol; at least retromer displacement seems to require its catalytic activity (PubMed:19531583, PubMed:20923837). Required for retrograde transport of cargo proteins from endosomes to the trans-Golgi network (TGN); the function seems to require its catalytic activity. Involved in regulation of autophagy (PubMed:22354992). May act as a molecular switch between endosomal and autophagosomal transport and is involved in reprogramming vesicle trafficking upon autophagy induction. Involved in the trafficking of ATG9A upon activation of autophagy. May regulate the recruitment of ATG9A-AP2-containing vesicles to autophagic membranes (PubMed:24603492).</text>
</comment>
<comment type="subunit">
    <text evidence="6 7 8 14">Interacts with MAP1LC3A, MAP1LC3B, MAP1LC3C, GABARAP, GABARAPL1, GABARAPL2. Interacts with VPS29 and VPS35; indicative for an association with retromer CSC subcomplex. MAP1LC3A and VPS29 compete for binding to TBC1D5 (PubMed:20923837, PubMed:22354992). Interacts with AP2M1; indicative for an association with the AP2 complex. Interacts with ULK1 and ATG13 (phosphorylated); indicative for an association with the activated ULK1-ATG13-FIP200 complex. Interacts with ATG9A; the interactions seems to be restricted to the AP2-clathrin-associated fraction of ATG9A (PubMed:24603492).</text>
</comment>
<comment type="interaction">
    <interactant intactId="EBI-742381">
        <id>Q92609</id>
    </interactant>
    <interactant intactId="EBI-297683">
        <id>Q96CW1</id>
        <label>AP2M1</label>
    </interactant>
    <organismsDiffer>false</organismsDiffer>
    <experiments>4</experiments>
</comment>
<comment type="interaction">
    <interactant intactId="EBI-742381">
        <id>Q92609</id>
    </interactant>
    <interactant intactId="EBI-930964">
        <id>P54253</id>
        <label>ATXN1</label>
    </interactant>
    <organismsDiffer>false</organismsDiffer>
    <experiments>2</experiments>
</comment>
<comment type="interaction">
    <interactant intactId="EBI-742381">
        <id>Q92609</id>
    </interactant>
    <interactant intactId="EBI-14357960">
        <id>Q9BZP6</id>
        <label>CHIA</label>
    </interactant>
    <organismsDiffer>false</organismsDiffer>
    <experiments>3</experiments>
</comment>
<comment type="interaction">
    <interactant intactId="EBI-742381">
        <id>Q92609</id>
    </interactant>
    <interactant intactId="EBI-914660">
        <id>Q9UJT9</id>
        <label>FBXL7</label>
    </interactant>
    <organismsDiffer>false</organismsDiffer>
    <experiments>3</experiments>
</comment>
<comment type="interaction">
    <interactant intactId="EBI-742381">
        <id>Q92609</id>
    </interactant>
    <interactant intactId="EBI-746969">
        <id>Q9H0R8</id>
        <label>GABARAPL1</label>
    </interactant>
    <organismsDiffer>false</organismsDiffer>
    <experiments>6</experiments>
</comment>
<comment type="interaction">
    <interactant intactId="EBI-742381">
        <id>Q92609</id>
    </interactant>
    <interactant intactId="EBI-720116">
        <id>P60520</id>
        <label>GABARAPL2</label>
    </interactant>
    <organismsDiffer>false</organismsDiffer>
    <experiments>6</experiments>
</comment>
<comment type="interaction">
    <interactant intactId="EBI-742381">
        <id>Q92609</id>
    </interactant>
    <interactant intactId="EBI-466029">
        <id>P42858</id>
        <label>HTT</label>
    </interactant>
    <organismsDiffer>false</organismsDiffer>
    <experiments>3</experiments>
</comment>
<comment type="interaction">
    <interactant intactId="EBI-742381">
        <id>Q92609</id>
    </interactant>
    <interactant intactId="EBI-373144">
        <id>Q9GZQ8</id>
        <label>MAP1LC3B</label>
    </interactant>
    <organismsDiffer>false</organismsDiffer>
    <experiments>2</experiments>
</comment>
<comment type="interaction">
    <interactant intactId="EBI-742381">
        <id>Q92609</id>
    </interactant>
    <interactant intactId="EBI-718596">
        <id>Q9UBQ0</id>
        <label>VPS29</label>
    </interactant>
    <organismsDiffer>false</organismsDiffer>
    <experiments>11</experiments>
</comment>
<comment type="interaction">
    <interactant intactId="EBI-742381">
        <id>Q92609</id>
    </interactant>
    <interactant intactId="EBI-1054634">
        <id>Q96QK1</id>
        <label>VPS35</label>
    </interactant>
    <organismsDiffer>false</organismsDiffer>
    <experiments>10</experiments>
</comment>
<comment type="interaction">
    <interactant intactId="EBI-742381">
        <id>Q92609</id>
    </interactant>
    <interactant intactId="EBI-739899">
        <id>P24278</id>
        <label>ZBTB25</label>
    </interactant>
    <organismsDiffer>false</organismsDiffer>
    <experiments>3</experiments>
</comment>
<comment type="interaction">
    <interactant intactId="EBI-742381">
        <id>Q92609</id>
    </interactant>
    <interactant intactId="EBI-8334188">
        <id>Q9QZ88</id>
        <label>Vps29</label>
    </interactant>
    <organismsDiffer>true</organismsDiffer>
    <experiments>5</experiments>
</comment>
<comment type="subcellular location">
    <subcellularLocation>
        <location evidence="6">Endosome membrane</location>
    </subcellularLocation>
    <subcellularLocation>
        <location evidence="7">Cytoplasmic vesicle</location>
        <location evidence="7">Autophagosome</location>
    </subcellularLocation>
    <text evidence="7">During starvation induced autophagy is relocalized from endosomal localization to LC3-positive autophagosomes.</text>
</comment>
<comment type="alternative products">
    <event type="alternative splicing"/>
    <isoform>
        <id>Q92609-1</id>
        <name>1</name>
        <sequence type="displayed"/>
    </isoform>
    <isoform>
        <id>Q92609-2</id>
        <name>2</name>
        <sequence type="described" ref="VSP_045039"/>
    </isoform>
</comment>
<comment type="domain">
    <text evidence="2">The arginine and glutamine fingers are critical for the GTPase-activating mechanism, they pull out Rab's 'switch 2' glutamine and insert in Rab's active site.</text>
</comment>
<comment type="domain">
    <text evidence="7 13">The LIR (LC3-interacting region) motif mediates the interaction with ATG8 family proteins. LIR 1 is also implicated in interaction with retromer; LIR 2 is only implicated in interaction with ATG8 family proteins.</text>
</comment>
<comment type="sequence caution" evidence="10">
    <conflict type="erroneous initiation">
        <sequence resource="EMBL-CDS" id="BAA13201"/>
    </conflict>
</comment>
<gene>
    <name type="primary">TBC1D5</name>
    <name type="synonym">KIAA0210</name>
</gene>